<sequence>MARGKRSTQRDADLELESLQSEIESESPQPVTKSKAKKNKKKLNKASAFNSDNDSNYDLKPEDDEVDEEVVPVKKKPSKKSKKAKANAFEAFADEQSVEEEEEEDSEKPVRKNKKSSKKASPKNAFDALADDMDDLSLDEEESESSEKSKKKKKKSKSKDDGSEALDDGDIESSEKDKKKKKKSKENDDAPKKDRKTRKKEEKARKLASMLESENKDNDANAAPLNKTDAFKDGLPSGRLIFAYASGQKVAPDGSNPADGITVTGNLLSPPNSRDLQVEKLSVSAWGKLLIKDSELNLINGRRYGLIAPNGSGKSTLLHAIACGLIPTPSSLDFYLLDREYIPNELTCVEAVLDINEQERKHLEAMMEDLLDDPDKNAVELDTIQTRLTDLETENSDHRVYKILRGLQFTDEMIAKRTNELSGGWRMRIALARILFIKPTLMMLDEPTNHLDLEAVAWLEEYLTHEMEGHTLLITCHTQDTLNEVCTDIIHLYHQKLDYYSGNYDTFLKVRAERDVQLAKKARQQEKDMAKLQNKLNMTGSEQQKKAKAKVKAMNKKLEKDKQSGKVLDEEIIQEKQLVIRFEDCGGGIPSPAIKFQDVSFNYPGGPTIFSKLNFGLDLKSRVALVGPNGAGKTTLIKLILEKVQPSTGSVVRHHGLRLALFNQHMGDQLDMRLSAVEWLRTKFGNKPEGEMRRIVGRYGLTGKSQVIPMGQLSDGQRRRVLFAFLGMTQPHILLLDEPTNALDIDTIDALADALNNFDGGVVFITHDFRLIDQVAEEIWIVQNGTVKEFDGEIRDYKMMLKQQIAKEREEERRIELEKQKK</sequence>
<evidence type="ECO:0000255" key="1">
    <source>
        <dbReference type="PROSITE-ProRule" id="PRU00434"/>
    </source>
</evidence>
<evidence type="ECO:0000256" key="2">
    <source>
        <dbReference type="SAM" id="MobiDB-lite"/>
    </source>
</evidence>
<evidence type="ECO:0000269" key="3">
    <source>
    </source>
</evidence>
<evidence type="ECO:0000269" key="4">
    <source>
    </source>
</evidence>
<evidence type="ECO:0000305" key="5"/>
<accession>Q9USH9</accession>
<keyword id="KW-0067">ATP-binding</keyword>
<keyword id="KW-0963">Cytoplasm</keyword>
<keyword id="KW-0547">Nucleotide-binding</keyword>
<keyword id="KW-0597">Phosphoprotein</keyword>
<keyword id="KW-1185">Reference proteome</keyword>
<keyword id="KW-0677">Repeat</keyword>
<protein>
    <recommendedName>
        <fullName>Uncharacterized ABC transporter ATP-binding protein C825.01</fullName>
    </recommendedName>
</protein>
<proteinExistence type="evidence at protein level"/>
<name>YJQ1_SCHPO</name>
<comment type="subcellular location">
    <subcellularLocation>
        <location evidence="3">Cytoplasm</location>
    </subcellularLocation>
</comment>
<comment type="similarity">
    <text evidence="5">Belongs to the ABC transporter superfamily.</text>
</comment>
<gene>
    <name type="ORF">SPCC825.01</name>
</gene>
<feature type="chain" id="PRO_0000310289" description="Uncharacterized ABC transporter ATP-binding protein C825.01">
    <location>
        <begin position="1"/>
        <end position="822"/>
    </location>
</feature>
<feature type="domain" description="ABC transporter 1" evidence="1">
    <location>
        <begin position="276"/>
        <end position="519"/>
    </location>
</feature>
<feature type="domain" description="ABC transporter 2" evidence="1">
    <location>
        <begin position="594"/>
        <end position="809"/>
    </location>
</feature>
<feature type="region of interest" description="Disordered" evidence="2">
    <location>
        <begin position="1"/>
        <end position="230"/>
    </location>
</feature>
<feature type="compositionally biased region" description="Basic residues" evidence="2">
    <location>
        <begin position="34"/>
        <end position="44"/>
    </location>
</feature>
<feature type="compositionally biased region" description="Acidic residues" evidence="2">
    <location>
        <begin position="61"/>
        <end position="70"/>
    </location>
</feature>
<feature type="compositionally biased region" description="Basic residues" evidence="2">
    <location>
        <begin position="73"/>
        <end position="85"/>
    </location>
</feature>
<feature type="compositionally biased region" description="Acidic residues" evidence="2">
    <location>
        <begin position="92"/>
        <end position="106"/>
    </location>
</feature>
<feature type="compositionally biased region" description="Basic residues" evidence="2">
    <location>
        <begin position="111"/>
        <end position="121"/>
    </location>
</feature>
<feature type="compositionally biased region" description="Acidic residues" evidence="2">
    <location>
        <begin position="129"/>
        <end position="144"/>
    </location>
</feature>
<feature type="compositionally biased region" description="Acidic residues" evidence="2">
    <location>
        <begin position="163"/>
        <end position="172"/>
    </location>
</feature>
<feature type="binding site" evidence="1">
    <location>
        <begin position="308"/>
        <end position="315"/>
    </location>
    <ligand>
        <name>ATP</name>
        <dbReference type="ChEBI" id="CHEBI:30616"/>
    </ligand>
</feature>
<feature type="binding site" evidence="1">
    <location>
        <begin position="627"/>
        <end position="634"/>
    </location>
    <ligand>
        <name>ATP</name>
        <dbReference type="ChEBI" id="CHEBI:30616"/>
    </ligand>
</feature>
<feature type="modified residue" description="Phosphoserine" evidence="4">
    <location>
        <position position="27"/>
    </location>
</feature>
<feature type="modified residue" description="Phosphoserine" evidence="4">
    <location>
        <position position="47"/>
    </location>
</feature>
<feature type="modified residue" description="Phosphoserine" evidence="4">
    <location>
        <position position="51"/>
    </location>
</feature>
<feature type="modified residue" description="Phosphoserine" evidence="4">
    <location>
        <position position="55"/>
    </location>
</feature>
<feature type="modified residue" description="Phosphotyrosine" evidence="4">
    <location>
        <position position="57"/>
    </location>
</feature>
<feature type="modified residue" description="Phosphoserine" evidence="4">
    <location>
        <position position="97"/>
    </location>
</feature>
<feature type="modified residue" description="Phosphoserine" evidence="4">
    <location>
        <position position="137"/>
    </location>
</feature>
<feature type="modified residue" description="Phosphoserine" evidence="4">
    <location>
        <position position="163"/>
    </location>
</feature>
<dbReference type="EMBL" id="CU329672">
    <property type="protein sequence ID" value="CAB58409.1"/>
    <property type="molecule type" value="Genomic_DNA"/>
</dbReference>
<dbReference type="PIR" id="T41622">
    <property type="entry name" value="T41622"/>
</dbReference>
<dbReference type="RefSeq" id="NP_588051.1">
    <property type="nucleotide sequence ID" value="NM_001023043.2"/>
</dbReference>
<dbReference type="SMR" id="Q9USH9"/>
<dbReference type="BioGRID" id="276071">
    <property type="interactions" value="4"/>
</dbReference>
<dbReference type="STRING" id="284812.Q9USH9"/>
<dbReference type="iPTMnet" id="Q9USH9"/>
<dbReference type="PaxDb" id="4896-SPCC825.01.1"/>
<dbReference type="EnsemblFungi" id="SPCC825.01.1">
    <property type="protein sequence ID" value="SPCC825.01.1:pep"/>
    <property type="gene ID" value="SPCC825.01"/>
</dbReference>
<dbReference type="KEGG" id="spo:2539509"/>
<dbReference type="PomBase" id="SPCC825.01"/>
<dbReference type="VEuPathDB" id="FungiDB:SPCC825.01"/>
<dbReference type="eggNOG" id="KOG0927">
    <property type="taxonomic scope" value="Eukaryota"/>
</dbReference>
<dbReference type="HOGENOM" id="CLU_000604_36_6_1"/>
<dbReference type="InParanoid" id="Q9USH9"/>
<dbReference type="OMA" id="YLDQHTK"/>
<dbReference type="PhylomeDB" id="Q9USH9"/>
<dbReference type="PRO" id="PR:Q9USH9"/>
<dbReference type="Proteomes" id="UP000002485">
    <property type="component" value="Chromosome III"/>
</dbReference>
<dbReference type="GO" id="GO:0005829">
    <property type="term" value="C:cytosol"/>
    <property type="evidence" value="ECO:0007005"/>
    <property type="project" value="PomBase"/>
</dbReference>
<dbReference type="GO" id="GO:0005524">
    <property type="term" value="F:ATP binding"/>
    <property type="evidence" value="ECO:0000318"/>
    <property type="project" value="GO_Central"/>
</dbReference>
<dbReference type="GO" id="GO:0016887">
    <property type="term" value="F:ATP hydrolysis activity"/>
    <property type="evidence" value="ECO:0000255"/>
    <property type="project" value="PomBase"/>
</dbReference>
<dbReference type="GO" id="GO:0002183">
    <property type="term" value="P:cytoplasmic translational initiation"/>
    <property type="evidence" value="ECO:0000250"/>
    <property type="project" value="PomBase"/>
</dbReference>
<dbReference type="CDD" id="cd03221">
    <property type="entry name" value="ABCF_EF-3"/>
    <property type="match status" value="2"/>
</dbReference>
<dbReference type="FunFam" id="3.40.50.300:FF:000104">
    <property type="entry name" value="ATP-binding cassette sub-family F member 3"/>
    <property type="match status" value="1"/>
</dbReference>
<dbReference type="FunFam" id="3.40.50.300:FF:003993">
    <property type="entry name" value="Ribosome biogenesis ATPase"/>
    <property type="match status" value="1"/>
</dbReference>
<dbReference type="Gene3D" id="3.40.50.300">
    <property type="entry name" value="P-loop containing nucleotide triphosphate hydrolases"/>
    <property type="match status" value="2"/>
</dbReference>
<dbReference type="InterPro" id="IPR003593">
    <property type="entry name" value="AAA+_ATPase"/>
</dbReference>
<dbReference type="InterPro" id="IPR032781">
    <property type="entry name" value="ABC_tran_Xtn"/>
</dbReference>
<dbReference type="InterPro" id="IPR003439">
    <property type="entry name" value="ABC_transporter-like_ATP-bd"/>
</dbReference>
<dbReference type="InterPro" id="IPR017871">
    <property type="entry name" value="ABC_transporter-like_CS"/>
</dbReference>
<dbReference type="InterPro" id="IPR050611">
    <property type="entry name" value="ABCF_EF3_subfamily"/>
</dbReference>
<dbReference type="InterPro" id="IPR027417">
    <property type="entry name" value="P-loop_NTPase"/>
</dbReference>
<dbReference type="PANTHER" id="PTHR19211">
    <property type="entry name" value="ATP-BINDING TRANSPORT PROTEIN-RELATED"/>
    <property type="match status" value="1"/>
</dbReference>
<dbReference type="PANTHER" id="PTHR19211:SF131">
    <property type="entry name" value="RIBOSOME BIOGENESIS ATPASE"/>
    <property type="match status" value="1"/>
</dbReference>
<dbReference type="Pfam" id="PF00005">
    <property type="entry name" value="ABC_tran"/>
    <property type="match status" value="2"/>
</dbReference>
<dbReference type="Pfam" id="PF12848">
    <property type="entry name" value="ABC_tran_Xtn"/>
    <property type="match status" value="1"/>
</dbReference>
<dbReference type="SMART" id="SM00382">
    <property type="entry name" value="AAA"/>
    <property type="match status" value="2"/>
</dbReference>
<dbReference type="SUPFAM" id="SSF52540">
    <property type="entry name" value="P-loop containing nucleoside triphosphate hydrolases"/>
    <property type="match status" value="2"/>
</dbReference>
<dbReference type="PROSITE" id="PS00211">
    <property type="entry name" value="ABC_TRANSPORTER_1"/>
    <property type="match status" value="1"/>
</dbReference>
<dbReference type="PROSITE" id="PS50893">
    <property type="entry name" value="ABC_TRANSPORTER_2"/>
    <property type="match status" value="2"/>
</dbReference>
<reference key="1">
    <citation type="journal article" date="2002" name="Nature">
        <title>The genome sequence of Schizosaccharomyces pombe.</title>
        <authorList>
            <person name="Wood V."/>
            <person name="Gwilliam R."/>
            <person name="Rajandream M.A."/>
            <person name="Lyne M.H."/>
            <person name="Lyne R."/>
            <person name="Stewart A."/>
            <person name="Sgouros J.G."/>
            <person name="Peat N."/>
            <person name="Hayles J."/>
            <person name="Baker S.G."/>
            <person name="Basham D."/>
            <person name="Bowman S."/>
            <person name="Brooks K."/>
            <person name="Brown D."/>
            <person name="Brown S."/>
            <person name="Chillingworth T."/>
            <person name="Churcher C.M."/>
            <person name="Collins M."/>
            <person name="Connor R."/>
            <person name="Cronin A."/>
            <person name="Davis P."/>
            <person name="Feltwell T."/>
            <person name="Fraser A."/>
            <person name="Gentles S."/>
            <person name="Goble A."/>
            <person name="Hamlin N."/>
            <person name="Harris D.E."/>
            <person name="Hidalgo J."/>
            <person name="Hodgson G."/>
            <person name="Holroyd S."/>
            <person name="Hornsby T."/>
            <person name="Howarth S."/>
            <person name="Huckle E.J."/>
            <person name="Hunt S."/>
            <person name="Jagels K."/>
            <person name="James K.D."/>
            <person name="Jones L."/>
            <person name="Jones M."/>
            <person name="Leather S."/>
            <person name="McDonald S."/>
            <person name="McLean J."/>
            <person name="Mooney P."/>
            <person name="Moule S."/>
            <person name="Mungall K.L."/>
            <person name="Murphy L.D."/>
            <person name="Niblett D."/>
            <person name="Odell C."/>
            <person name="Oliver K."/>
            <person name="O'Neil S."/>
            <person name="Pearson D."/>
            <person name="Quail M.A."/>
            <person name="Rabbinowitsch E."/>
            <person name="Rutherford K.M."/>
            <person name="Rutter S."/>
            <person name="Saunders D."/>
            <person name="Seeger K."/>
            <person name="Sharp S."/>
            <person name="Skelton J."/>
            <person name="Simmonds M.N."/>
            <person name="Squares R."/>
            <person name="Squares S."/>
            <person name="Stevens K."/>
            <person name="Taylor K."/>
            <person name="Taylor R.G."/>
            <person name="Tivey A."/>
            <person name="Walsh S.V."/>
            <person name="Warren T."/>
            <person name="Whitehead S."/>
            <person name="Woodward J.R."/>
            <person name="Volckaert G."/>
            <person name="Aert R."/>
            <person name="Robben J."/>
            <person name="Grymonprez B."/>
            <person name="Weltjens I."/>
            <person name="Vanstreels E."/>
            <person name="Rieger M."/>
            <person name="Schaefer M."/>
            <person name="Mueller-Auer S."/>
            <person name="Gabel C."/>
            <person name="Fuchs M."/>
            <person name="Duesterhoeft A."/>
            <person name="Fritzc C."/>
            <person name="Holzer E."/>
            <person name="Moestl D."/>
            <person name="Hilbert H."/>
            <person name="Borzym K."/>
            <person name="Langer I."/>
            <person name="Beck A."/>
            <person name="Lehrach H."/>
            <person name="Reinhardt R."/>
            <person name="Pohl T.M."/>
            <person name="Eger P."/>
            <person name="Zimmermann W."/>
            <person name="Wedler H."/>
            <person name="Wambutt R."/>
            <person name="Purnelle B."/>
            <person name="Goffeau A."/>
            <person name="Cadieu E."/>
            <person name="Dreano S."/>
            <person name="Gloux S."/>
            <person name="Lelaure V."/>
            <person name="Mottier S."/>
            <person name="Galibert F."/>
            <person name="Aves S.J."/>
            <person name="Xiang Z."/>
            <person name="Hunt C."/>
            <person name="Moore K."/>
            <person name="Hurst S.M."/>
            <person name="Lucas M."/>
            <person name="Rochet M."/>
            <person name="Gaillardin C."/>
            <person name="Tallada V.A."/>
            <person name="Garzon A."/>
            <person name="Thode G."/>
            <person name="Daga R.R."/>
            <person name="Cruzado L."/>
            <person name="Jimenez J."/>
            <person name="Sanchez M."/>
            <person name="del Rey F."/>
            <person name="Benito J."/>
            <person name="Dominguez A."/>
            <person name="Revuelta J.L."/>
            <person name="Moreno S."/>
            <person name="Armstrong J."/>
            <person name="Forsburg S.L."/>
            <person name="Cerutti L."/>
            <person name="Lowe T."/>
            <person name="McCombie W.R."/>
            <person name="Paulsen I."/>
            <person name="Potashkin J."/>
            <person name="Shpakovski G.V."/>
            <person name="Ussery D."/>
            <person name="Barrell B.G."/>
            <person name="Nurse P."/>
        </authorList>
    </citation>
    <scope>NUCLEOTIDE SEQUENCE [LARGE SCALE GENOMIC DNA]</scope>
    <source>
        <strain>972 / ATCC 24843</strain>
    </source>
</reference>
<reference key="2">
    <citation type="journal article" date="2006" name="Nat. Biotechnol.">
        <title>ORFeome cloning and global analysis of protein localization in the fission yeast Schizosaccharomyces pombe.</title>
        <authorList>
            <person name="Matsuyama A."/>
            <person name="Arai R."/>
            <person name="Yashiroda Y."/>
            <person name="Shirai A."/>
            <person name="Kamata A."/>
            <person name="Sekido S."/>
            <person name="Kobayashi Y."/>
            <person name="Hashimoto A."/>
            <person name="Hamamoto M."/>
            <person name="Hiraoka Y."/>
            <person name="Horinouchi S."/>
            <person name="Yoshida M."/>
        </authorList>
    </citation>
    <scope>SUBCELLULAR LOCATION [LARGE SCALE ANALYSIS]</scope>
</reference>
<reference key="3">
    <citation type="journal article" date="2008" name="J. Proteome Res.">
        <title>Phosphoproteome analysis of fission yeast.</title>
        <authorList>
            <person name="Wilson-Grady J.T."/>
            <person name="Villen J."/>
            <person name="Gygi S.P."/>
        </authorList>
    </citation>
    <scope>PHOSPHORYLATION [LARGE SCALE ANALYSIS] AT SER-27; SER-47; SER-51; SER-55; TYR-57; SER-97; SER-137 AND SER-163</scope>
    <scope>IDENTIFICATION BY MASS SPECTROMETRY</scope>
</reference>
<organism>
    <name type="scientific">Schizosaccharomyces pombe (strain 972 / ATCC 24843)</name>
    <name type="common">Fission yeast</name>
    <dbReference type="NCBI Taxonomy" id="284812"/>
    <lineage>
        <taxon>Eukaryota</taxon>
        <taxon>Fungi</taxon>
        <taxon>Dikarya</taxon>
        <taxon>Ascomycota</taxon>
        <taxon>Taphrinomycotina</taxon>
        <taxon>Schizosaccharomycetes</taxon>
        <taxon>Schizosaccharomycetales</taxon>
        <taxon>Schizosaccharomycetaceae</taxon>
        <taxon>Schizosaccharomyces</taxon>
    </lineage>
</organism>